<accession>Q0T478</accession>
<feature type="chain" id="PRO_1000043182" description="3-dehydroquinate dehydratase">
    <location>
        <begin position="1"/>
        <end position="252"/>
    </location>
</feature>
<feature type="active site" description="Proton donor/acceptor" evidence="1">
    <location>
        <position position="143"/>
    </location>
</feature>
<feature type="active site" description="Schiff-base intermediate with substrate" evidence="1">
    <location>
        <position position="170"/>
    </location>
</feature>
<feature type="binding site" evidence="1">
    <location>
        <position position="21"/>
    </location>
    <ligand>
        <name>3-dehydroquinate</name>
        <dbReference type="ChEBI" id="CHEBI:32364"/>
    </ligand>
</feature>
<feature type="binding site" evidence="1">
    <location>
        <begin position="46"/>
        <end position="48"/>
    </location>
    <ligand>
        <name>3-dehydroquinate</name>
        <dbReference type="ChEBI" id="CHEBI:32364"/>
    </ligand>
</feature>
<feature type="binding site" evidence="1">
    <location>
        <position position="82"/>
    </location>
    <ligand>
        <name>3-dehydroquinate</name>
        <dbReference type="ChEBI" id="CHEBI:32364"/>
    </ligand>
</feature>
<feature type="binding site" evidence="1">
    <location>
        <position position="213"/>
    </location>
    <ligand>
        <name>3-dehydroquinate</name>
        <dbReference type="ChEBI" id="CHEBI:32364"/>
    </ligand>
</feature>
<feature type="binding site" evidence="1">
    <location>
        <position position="232"/>
    </location>
    <ligand>
        <name>3-dehydroquinate</name>
        <dbReference type="ChEBI" id="CHEBI:32364"/>
    </ligand>
</feature>
<feature type="binding site" evidence="1">
    <location>
        <position position="236"/>
    </location>
    <ligand>
        <name>3-dehydroquinate</name>
        <dbReference type="ChEBI" id="CHEBI:32364"/>
    </ligand>
</feature>
<gene>
    <name evidence="1" type="primary">aroD</name>
    <name type="ordered locus">SFV_1719</name>
</gene>
<comment type="function">
    <text evidence="1">Involved in the third step of the chorismate pathway, which leads to the biosynthesis of aromatic amino acids. Catalyzes the cis-dehydration of 3-dehydroquinate (DHQ) and introduces the first double bond of the aromatic ring to yield 3-dehydroshikimate.</text>
</comment>
<comment type="catalytic activity">
    <reaction evidence="1">
        <text>3-dehydroquinate = 3-dehydroshikimate + H2O</text>
        <dbReference type="Rhea" id="RHEA:21096"/>
        <dbReference type="ChEBI" id="CHEBI:15377"/>
        <dbReference type="ChEBI" id="CHEBI:16630"/>
        <dbReference type="ChEBI" id="CHEBI:32364"/>
        <dbReference type="EC" id="4.2.1.10"/>
    </reaction>
</comment>
<comment type="pathway">
    <text evidence="1">Metabolic intermediate biosynthesis; chorismate biosynthesis; chorismate from D-erythrose 4-phosphate and phosphoenolpyruvate: step 3/7.</text>
</comment>
<comment type="subunit">
    <text evidence="1">Homodimer.</text>
</comment>
<comment type="similarity">
    <text evidence="1">Belongs to the type-I 3-dehydroquinase family.</text>
</comment>
<proteinExistence type="inferred from homology"/>
<organism>
    <name type="scientific">Shigella flexneri serotype 5b (strain 8401)</name>
    <dbReference type="NCBI Taxonomy" id="373384"/>
    <lineage>
        <taxon>Bacteria</taxon>
        <taxon>Pseudomonadati</taxon>
        <taxon>Pseudomonadota</taxon>
        <taxon>Gammaproteobacteria</taxon>
        <taxon>Enterobacterales</taxon>
        <taxon>Enterobacteriaceae</taxon>
        <taxon>Shigella</taxon>
    </lineage>
</organism>
<name>AROD_SHIF8</name>
<reference key="1">
    <citation type="journal article" date="2006" name="BMC Genomics">
        <title>Complete genome sequence of Shigella flexneri 5b and comparison with Shigella flexneri 2a.</title>
        <authorList>
            <person name="Nie H."/>
            <person name="Yang F."/>
            <person name="Zhang X."/>
            <person name="Yang J."/>
            <person name="Chen L."/>
            <person name="Wang J."/>
            <person name="Xiong Z."/>
            <person name="Peng J."/>
            <person name="Sun L."/>
            <person name="Dong J."/>
            <person name="Xue Y."/>
            <person name="Xu X."/>
            <person name="Chen S."/>
            <person name="Yao Z."/>
            <person name="Shen Y."/>
            <person name="Jin Q."/>
        </authorList>
    </citation>
    <scope>NUCLEOTIDE SEQUENCE [LARGE SCALE GENOMIC DNA]</scope>
    <source>
        <strain>8401</strain>
    </source>
</reference>
<sequence length="252" mass="27518">MKTVTVKDLVIGAGAPKIIVSLMAKDIARVKSEALAYREADFDILEWRVDHFADLSNVESVMAAAKILRETMPEKPLLFTFRSAKEGGEQAISTEAYIALNRAAIDSGLVDMIDLELFTGDDQVKETVAYAHAHDVKVVMSNHDFHKTPEAEEIIARLRKMQSFDADIPKIALMPQSTSDVLTLLAATLEMQEQYADRPIITMSMAKTGVISRLVGEVFGSAATFGAVKKASAPGQISVNDLRTVLTILHQA</sequence>
<dbReference type="EC" id="4.2.1.10" evidence="1"/>
<dbReference type="EMBL" id="CP000266">
    <property type="protein sequence ID" value="ABF03887.1"/>
    <property type="molecule type" value="Genomic_DNA"/>
</dbReference>
<dbReference type="RefSeq" id="WP_000860164.1">
    <property type="nucleotide sequence ID" value="NC_008258.1"/>
</dbReference>
<dbReference type="SMR" id="Q0T478"/>
<dbReference type="KEGG" id="sfv:SFV_1719"/>
<dbReference type="HOGENOM" id="CLU_064444_0_0_6"/>
<dbReference type="UniPathway" id="UPA00053">
    <property type="reaction ID" value="UER00086"/>
</dbReference>
<dbReference type="Proteomes" id="UP000000659">
    <property type="component" value="Chromosome"/>
</dbReference>
<dbReference type="GO" id="GO:0003855">
    <property type="term" value="F:3-dehydroquinate dehydratase activity"/>
    <property type="evidence" value="ECO:0007669"/>
    <property type="project" value="UniProtKB-UniRule"/>
</dbReference>
<dbReference type="GO" id="GO:0046279">
    <property type="term" value="P:3,4-dihydroxybenzoate biosynthetic process"/>
    <property type="evidence" value="ECO:0007669"/>
    <property type="project" value="TreeGrafter"/>
</dbReference>
<dbReference type="GO" id="GO:0008652">
    <property type="term" value="P:amino acid biosynthetic process"/>
    <property type="evidence" value="ECO:0007669"/>
    <property type="project" value="UniProtKB-KW"/>
</dbReference>
<dbReference type="GO" id="GO:0009073">
    <property type="term" value="P:aromatic amino acid family biosynthetic process"/>
    <property type="evidence" value="ECO:0007669"/>
    <property type="project" value="UniProtKB-KW"/>
</dbReference>
<dbReference type="GO" id="GO:0009423">
    <property type="term" value="P:chorismate biosynthetic process"/>
    <property type="evidence" value="ECO:0007669"/>
    <property type="project" value="UniProtKB-UniRule"/>
</dbReference>
<dbReference type="CDD" id="cd00502">
    <property type="entry name" value="DHQase_I"/>
    <property type="match status" value="1"/>
</dbReference>
<dbReference type="FunFam" id="3.20.20.70:FF:000047">
    <property type="entry name" value="3-dehydroquinate dehydratase"/>
    <property type="match status" value="1"/>
</dbReference>
<dbReference type="Gene3D" id="3.20.20.70">
    <property type="entry name" value="Aldolase class I"/>
    <property type="match status" value="1"/>
</dbReference>
<dbReference type="HAMAP" id="MF_00214">
    <property type="entry name" value="AroD"/>
    <property type="match status" value="1"/>
</dbReference>
<dbReference type="InterPro" id="IPR018508">
    <property type="entry name" value="3-dehydroquinate_DH_AS"/>
</dbReference>
<dbReference type="InterPro" id="IPR013785">
    <property type="entry name" value="Aldolase_TIM"/>
</dbReference>
<dbReference type="InterPro" id="IPR001381">
    <property type="entry name" value="DHquinase_I"/>
</dbReference>
<dbReference type="InterPro" id="IPR050146">
    <property type="entry name" value="Type-I_3-dehydroquinase"/>
</dbReference>
<dbReference type="NCBIfam" id="TIGR01093">
    <property type="entry name" value="aroD"/>
    <property type="match status" value="1"/>
</dbReference>
<dbReference type="PANTHER" id="PTHR43699">
    <property type="entry name" value="3-DEHYDROQUINATE DEHYDRATASE"/>
    <property type="match status" value="1"/>
</dbReference>
<dbReference type="PANTHER" id="PTHR43699:SF1">
    <property type="entry name" value="3-DEHYDROQUINATE DEHYDRATASE"/>
    <property type="match status" value="1"/>
</dbReference>
<dbReference type="Pfam" id="PF01487">
    <property type="entry name" value="DHquinase_I"/>
    <property type="match status" value="1"/>
</dbReference>
<dbReference type="SUPFAM" id="SSF51569">
    <property type="entry name" value="Aldolase"/>
    <property type="match status" value="1"/>
</dbReference>
<dbReference type="PROSITE" id="PS01028">
    <property type="entry name" value="DEHYDROQUINASE_I"/>
    <property type="match status" value="1"/>
</dbReference>
<evidence type="ECO:0000255" key="1">
    <source>
        <dbReference type="HAMAP-Rule" id="MF_00214"/>
    </source>
</evidence>
<keyword id="KW-0028">Amino-acid biosynthesis</keyword>
<keyword id="KW-0057">Aromatic amino acid biosynthesis</keyword>
<keyword id="KW-0456">Lyase</keyword>
<keyword id="KW-0704">Schiff base</keyword>
<protein>
    <recommendedName>
        <fullName evidence="1">3-dehydroquinate dehydratase</fullName>
        <shortName evidence="1">3-dehydroquinase</shortName>
        <ecNumber evidence="1">4.2.1.10</ecNumber>
    </recommendedName>
    <alternativeName>
        <fullName evidence="1">Type I DHQase</fullName>
    </alternativeName>
    <alternativeName>
        <fullName evidence="1">Type I dehydroquinase</fullName>
        <shortName evidence="1">DHQ1</shortName>
    </alternativeName>
</protein>